<comment type="catalytic activity">
    <reaction evidence="1">
        <text>D-erythro-1-(imidazol-4-yl)glycerol 3-phosphate = 3-(imidazol-4-yl)-2-oxopropyl phosphate + H2O</text>
        <dbReference type="Rhea" id="RHEA:11040"/>
        <dbReference type="ChEBI" id="CHEBI:15377"/>
        <dbReference type="ChEBI" id="CHEBI:57766"/>
        <dbReference type="ChEBI" id="CHEBI:58278"/>
        <dbReference type="EC" id="4.2.1.19"/>
    </reaction>
</comment>
<comment type="catalytic activity">
    <reaction evidence="1">
        <text>L-histidinol phosphate + H2O = L-histidinol + phosphate</text>
        <dbReference type="Rhea" id="RHEA:14465"/>
        <dbReference type="ChEBI" id="CHEBI:15377"/>
        <dbReference type="ChEBI" id="CHEBI:43474"/>
        <dbReference type="ChEBI" id="CHEBI:57699"/>
        <dbReference type="ChEBI" id="CHEBI:57980"/>
        <dbReference type="EC" id="3.1.3.15"/>
    </reaction>
</comment>
<comment type="cofactor">
    <cofactor evidence="1">
        <name>Mg(2+)</name>
        <dbReference type="ChEBI" id="CHEBI:18420"/>
    </cofactor>
</comment>
<comment type="cofactor">
    <cofactor evidence="1">
        <name>Zn(2+)</name>
        <dbReference type="ChEBI" id="CHEBI:29105"/>
    </cofactor>
</comment>
<comment type="pathway">
    <text evidence="1">Amino-acid biosynthesis; L-histidine biosynthesis; L-histidine from 5-phospho-alpha-D-ribose 1-diphosphate: step 6/9.</text>
</comment>
<comment type="pathway">
    <text evidence="1">Amino-acid biosynthesis; L-histidine biosynthesis; L-histidine from 5-phospho-alpha-D-ribose 1-diphosphate: step 8/9.</text>
</comment>
<comment type="subcellular location">
    <subcellularLocation>
        <location evidence="1">Cytoplasm</location>
    </subcellularLocation>
</comment>
<comment type="similarity">
    <text evidence="1">In the N-terminal section; belongs to the histidinol-phosphatase family.</text>
</comment>
<comment type="similarity">
    <text evidence="1">In the C-terminal section; belongs to the imidazoleglycerol-phosphate dehydratase family.</text>
</comment>
<accession>Q9KSX1</accession>
<name>HIS7_VIBCH</name>
<sequence length="357" mass="39855">MSKQQKILFIDRDGTLIVEPPVDFQVDRLDKLKLEPYVIPSLLKLQEAGYRLVMVTNQDGLGTSSYPQADFDAPHNMMMDIFESQGVKFNDVLICPHFERDNCSCRKPKLGLVKEYLQGGKVDFKSSAVIGDRMTDLQLAENMAIRGIQYHPQTMGWLDIVKDLTTKPRVAQVVRKTKETDIQVLVNLDQTGGNQIETGLGFFDHMLDQIATHGGFQLQLKVVGDLHIDDHHTVEDTALALGQALREALGDKRGIGRFGFTLPMDECLAQCALDLSGRPYLKFDASFSRPQVGDLSTEMVYHFFRSLTDTLACTLHLSSSGDNDHHIIESLFKAFGRTLRQAITVQGNDLPSSKGVL</sequence>
<feature type="chain" id="PRO_0000158223" description="Histidine biosynthesis bifunctional protein HisB">
    <location>
        <begin position="1"/>
        <end position="357"/>
    </location>
</feature>
<feature type="region of interest" description="Histidinol-phosphatase" evidence="1">
    <location>
        <begin position="1"/>
        <end position="168"/>
    </location>
</feature>
<feature type="region of interest" description="Imidazoleglycerol-phosphate dehydratase" evidence="1">
    <location>
        <begin position="169"/>
        <end position="357"/>
    </location>
</feature>
<feature type="active site" description="Nucleophile" evidence="1">
    <location>
        <position position="11"/>
    </location>
</feature>
<feature type="active site" description="Proton donor" evidence="1">
    <location>
        <position position="13"/>
    </location>
</feature>
<feature type="binding site" evidence="1">
    <location>
        <position position="11"/>
    </location>
    <ligand>
        <name>Mg(2+)</name>
        <dbReference type="ChEBI" id="CHEBI:18420"/>
    </ligand>
</feature>
<feature type="binding site" evidence="1">
    <location>
        <position position="13"/>
    </location>
    <ligand>
        <name>Mg(2+)</name>
        <dbReference type="ChEBI" id="CHEBI:18420"/>
    </ligand>
</feature>
<feature type="binding site" evidence="1">
    <location>
        <position position="95"/>
    </location>
    <ligand>
        <name>Zn(2+)</name>
        <dbReference type="ChEBI" id="CHEBI:29105"/>
    </ligand>
</feature>
<feature type="binding site" evidence="1">
    <location>
        <position position="97"/>
    </location>
    <ligand>
        <name>Zn(2+)</name>
        <dbReference type="ChEBI" id="CHEBI:29105"/>
    </ligand>
</feature>
<feature type="binding site" evidence="1">
    <location>
        <position position="103"/>
    </location>
    <ligand>
        <name>Zn(2+)</name>
        <dbReference type="ChEBI" id="CHEBI:29105"/>
    </ligand>
</feature>
<feature type="binding site" evidence="1">
    <location>
        <position position="105"/>
    </location>
    <ligand>
        <name>Zn(2+)</name>
        <dbReference type="ChEBI" id="CHEBI:29105"/>
    </ligand>
</feature>
<feature type="binding site" evidence="1">
    <location>
        <position position="132"/>
    </location>
    <ligand>
        <name>Mg(2+)</name>
        <dbReference type="ChEBI" id="CHEBI:18420"/>
    </ligand>
</feature>
<keyword id="KW-0028">Amino-acid biosynthesis</keyword>
<keyword id="KW-0963">Cytoplasm</keyword>
<keyword id="KW-0368">Histidine biosynthesis</keyword>
<keyword id="KW-0378">Hydrolase</keyword>
<keyword id="KW-0456">Lyase</keyword>
<keyword id="KW-0460">Magnesium</keyword>
<keyword id="KW-0479">Metal-binding</keyword>
<keyword id="KW-0511">Multifunctional enzyme</keyword>
<keyword id="KW-1185">Reference proteome</keyword>
<keyword id="KW-0862">Zinc</keyword>
<dbReference type="EC" id="3.1.3.15" evidence="1"/>
<dbReference type="EC" id="4.2.1.19" evidence="1"/>
<dbReference type="EMBL" id="AE003852">
    <property type="protein sequence ID" value="AAF94294.1"/>
    <property type="molecule type" value="Genomic_DNA"/>
</dbReference>
<dbReference type="PIR" id="B82238">
    <property type="entry name" value="B82238"/>
</dbReference>
<dbReference type="RefSeq" id="NP_230780.1">
    <property type="nucleotide sequence ID" value="NC_002505.1"/>
</dbReference>
<dbReference type="RefSeq" id="WP_000043567.1">
    <property type="nucleotide sequence ID" value="NZ_LT906614.1"/>
</dbReference>
<dbReference type="SMR" id="Q9KSX1"/>
<dbReference type="STRING" id="243277.VC_1135"/>
<dbReference type="DNASU" id="2614405"/>
<dbReference type="EnsemblBacteria" id="AAF94294">
    <property type="protein sequence ID" value="AAF94294"/>
    <property type="gene ID" value="VC_1135"/>
</dbReference>
<dbReference type="KEGG" id="vch:VC_1135"/>
<dbReference type="PATRIC" id="fig|243277.26.peg.1084"/>
<dbReference type="eggNOG" id="COG0131">
    <property type="taxonomic scope" value="Bacteria"/>
</dbReference>
<dbReference type="eggNOG" id="COG0241">
    <property type="taxonomic scope" value="Bacteria"/>
</dbReference>
<dbReference type="HOGENOM" id="CLU_044308_0_0_6"/>
<dbReference type="UniPathway" id="UPA00031">
    <property type="reaction ID" value="UER00011"/>
</dbReference>
<dbReference type="UniPathway" id="UPA00031">
    <property type="reaction ID" value="UER00013"/>
</dbReference>
<dbReference type="Proteomes" id="UP000000584">
    <property type="component" value="Chromosome 1"/>
</dbReference>
<dbReference type="GO" id="GO:0005737">
    <property type="term" value="C:cytoplasm"/>
    <property type="evidence" value="ECO:0007669"/>
    <property type="project" value="UniProtKB-SubCell"/>
</dbReference>
<dbReference type="GO" id="GO:0004401">
    <property type="term" value="F:histidinol-phosphatase activity"/>
    <property type="evidence" value="ECO:0007669"/>
    <property type="project" value="UniProtKB-UniRule"/>
</dbReference>
<dbReference type="GO" id="GO:0004424">
    <property type="term" value="F:imidazoleglycerol-phosphate dehydratase activity"/>
    <property type="evidence" value="ECO:0000318"/>
    <property type="project" value="GO_Central"/>
</dbReference>
<dbReference type="GO" id="GO:0046872">
    <property type="term" value="F:metal ion binding"/>
    <property type="evidence" value="ECO:0007669"/>
    <property type="project" value="UniProtKB-KW"/>
</dbReference>
<dbReference type="GO" id="GO:0000105">
    <property type="term" value="P:L-histidine biosynthetic process"/>
    <property type="evidence" value="ECO:0000318"/>
    <property type="project" value="GO_Central"/>
</dbReference>
<dbReference type="CDD" id="cd07503">
    <property type="entry name" value="HAD_HisB-N"/>
    <property type="match status" value="1"/>
</dbReference>
<dbReference type="CDD" id="cd07914">
    <property type="entry name" value="IGPD"/>
    <property type="match status" value="1"/>
</dbReference>
<dbReference type="FunFam" id="3.40.50.1000:FF:000061">
    <property type="entry name" value="Histidine biosynthesis bifunctional protein HisB"/>
    <property type="match status" value="1"/>
</dbReference>
<dbReference type="FunFam" id="3.30.230.40:FF:000001">
    <property type="entry name" value="Imidazoleglycerol-phosphate dehydratase HisB"/>
    <property type="match status" value="1"/>
</dbReference>
<dbReference type="FunFam" id="3.30.230.40:FF:000003">
    <property type="entry name" value="Imidazoleglycerol-phosphate dehydratase HisB"/>
    <property type="match status" value="1"/>
</dbReference>
<dbReference type="Gene3D" id="3.40.50.1000">
    <property type="entry name" value="HAD superfamily/HAD-like"/>
    <property type="match status" value="1"/>
</dbReference>
<dbReference type="Gene3D" id="3.30.230.40">
    <property type="entry name" value="Imidazole glycerol phosphate dehydratase, domain 1"/>
    <property type="match status" value="2"/>
</dbReference>
<dbReference type="HAMAP" id="MF_01022">
    <property type="entry name" value="Bifunc_HisB"/>
    <property type="match status" value="1"/>
</dbReference>
<dbReference type="HAMAP" id="MF_00076">
    <property type="entry name" value="HisB"/>
    <property type="match status" value="1"/>
</dbReference>
<dbReference type="InterPro" id="IPR036412">
    <property type="entry name" value="HAD-like_sf"/>
</dbReference>
<dbReference type="InterPro" id="IPR006549">
    <property type="entry name" value="HAD-SF_hydro_IIIA"/>
</dbReference>
<dbReference type="InterPro" id="IPR023214">
    <property type="entry name" value="HAD_sf"/>
</dbReference>
<dbReference type="InterPro" id="IPR020566">
    <property type="entry name" value="His_synth_bifunc_HisB"/>
</dbReference>
<dbReference type="InterPro" id="IPR005954">
    <property type="entry name" value="HisB_N"/>
</dbReference>
<dbReference type="InterPro" id="IPR006543">
    <property type="entry name" value="Histidinol-phos"/>
</dbReference>
<dbReference type="InterPro" id="IPR038494">
    <property type="entry name" value="IGPD_sf"/>
</dbReference>
<dbReference type="InterPro" id="IPR000807">
    <property type="entry name" value="ImidazoleglycerolP_deHydtase"/>
</dbReference>
<dbReference type="InterPro" id="IPR020565">
    <property type="entry name" value="ImidazoleglycerP_deHydtase_CS"/>
</dbReference>
<dbReference type="InterPro" id="IPR013954">
    <property type="entry name" value="PNK3P"/>
</dbReference>
<dbReference type="InterPro" id="IPR020568">
    <property type="entry name" value="Ribosomal_Su5_D2-typ_SF"/>
</dbReference>
<dbReference type="NCBIfam" id="TIGR01662">
    <property type="entry name" value="HAD-SF-IIIA"/>
    <property type="match status" value="1"/>
</dbReference>
<dbReference type="NCBIfam" id="TIGR01261">
    <property type="entry name" value="hisB_Nterm"/>
    <property type="match status" value="1"/>
</dbReference>
<dbReference type="NCBIfam" id="TIGR01656">
    <property type="entry name" value="Histidinol-ppas"/>
    <property type="match status" value="1"/>
</dbReference>
<dbReference type="NCBIfam" id="NF002111">
    <property type="entry name" value="PRK00951.2-1"/>
    <property type="match status" value="1"/>
</dbReference>
<dbReference type="NCBIfam" id="NF002114">
    <property type="entry name" value="PRK00951.2-4"/>
    <property type="match status" value="1"/>
</dbReference>
<dbReference type="NCBIfam" id="NF003937">
    <property type="entry name" value="PRK05446.1"/>
    <property type="match status" value="1"/>
</dbReference>
<dbReference type="PANTHER" id="PTHR23133:SF2">
    <property type="entry name" value="IMIDAZOLEGLYCEROL-PHOSPHATE DEHYDRATASE"/>
    <property type="match status" value="1"/>
</dbReference>
<dbReference type="PANTHER" id="PTHR23133">
    <property type="entry name" value="IMIDAZOLEGLYCEROL-PHOSPHATE DEHYDRATASE HIS7"/>
    <property type="match status" value="1"/>
</dbReference>
<dbReference type="Pfam" id="PF00475">
    <property type="entry name" value="IGPD"/>
    <property type="match status" value="1"/>
</dbReference>
<dbReference type="Pfam" id="PF08645">
    <property type="entry name" value="PNK3P"/>
    <property type="match status" value="1"/>
</dbReference>
<dbReference type="SUPFAM" id="SSF56784">
    <property type="entry name" value="HAD-like"/>
    <property type="match status" value="1"/>
</dbReference>
<dbReference type="SUPFAM" id="SSF54211">
    <property type="entry name" value="Ribosomal protein S5 domain 2-like"/>
    <property type="match status" value="2"/>
</dbReference>
<dbReference type="PROSITE" id="PS00954">
    <property type="entry name" value="IGP_DEHYDRATASE_1"/>
    <property type="match status" value="1"/>
</dbReference>
<dbReference type="PROSITE" id="PS00955">
    <property type="entry name" value="IGP_DEHYDRATASE_2"/>
    <property type="match status" value="1"/>
</dbReference>
<gene>
    <name evidence="1" type="primary">hisB</name>
    <name type="ordered locus">VC_1135</name>
</gene>
<proteinExistence type="inferred from homology"/>
<organism>
    <name type="scientific">Vibrio cholerae serotype O1 (strain ATCC 39315 / El Tor Inaba N16961)</name>
    <dbReference type="NCBI Taxonomy" id="243277"/>
    <lineage>
        <taxon>Bacteria</taxon>
        <taxon>Pseudomonadati</taxon>
        <taxon>Pseudomonadota</taxon>
        <taxon>Gammaproteobacteria</taxon>
        <taxon>Vibrionales</taxon>
        <taxon>Vibrionaceae</taxon>
        <taxon>Vibrio</taxon>
    </lineage>
</organism>
<protein>
    <recommendedName>
        <fullName evidence="1">Histidine biosynthesis bifunctional protein HisB</fullName>
    </recommendedName>
    <domain>
        <recommendedName>
            <fullName evidence="1">Histidinol-phosphatase</fullName>
            <ecNumber evidence="1">3.1.3.15</ecNumber>
        </recommendedName>
    </domain>
    <domain>
        <recommendedName>
            <fullName evidence="1">Imidazoleglycerol-phosphate dehydratase</fullName>
            <shortName evidence="1">IGPD</shortName>
            <ecNumber evidence="1">4.2.1.19</ecNumber>
        </recommendedName>
    </domain>
</protein>
<reference key="1">
    <citation type="journal article" date="2000" name="Nature">
        <title>DNA sequence of both chromosomes of the cholera pathogen Vibrio cholerae.</title>
        <authorList>
            <person name="Heidelberg J.F."/>
            <person name="Eisen J.A."/>
            <person name="Nelson W.C."/>
            <person name="Clayton R.A."/>
            <person name="Gwinn M.L."/>
            <person name="Dodson R.J."/>
            <person name="Haft D.H."/>
            <person name="Hickey E.K."/>
            <person name="Peterson J.D."/>
            <person name="Umayam L.A."/>
            <person name="Gill S.R."/>
            <person name="Nelson K.E."/>
            <person name="Read T.D."/>
            <person name="Tettelin H."/>
            <person name="Richardson D.L."/>
            <person name="Ermolaeva M.D."/>
            <person name="Vamathevan J.J."/>
            <person name="Bass S."/>
            <person name="Qin H."/>
            <person name="Dragoi I."/>
            <person name="Sellers P."/>
            <person name="McDonald L.A."/>
            <person name="Utterback T.R."/>
            <person name="Fleischmann R.D."/>
            <person name="Nierman W.C."/>
            <person name="White O."/>
            <person name="Salzberg S.L."/>
            <person name="Smith H.O."/>
            <person name="Colwell R.R."/>
            <person name="Mekalanos J.J."/>
            <person name="Venter J.C."/>
            <person name="Fraser C.M."/>
        </authorList>
    </citation>
    <scope>NUCLEOTIDE SEQUENCE [LARGE SCALE GENOMIC DNA]</scope>
    <source>
        <strain>ATCC 39315 / El Tor Inaba N16961</strain>
    </source>
</reference>
<evidence type="ECO:0000255" key="1">
    <source>
        <dbReference type="HAMAP-Rule" id="MF_01022"/>
    </source>
</evidence>